<comment type="function">
    <text evidence="1 8 9 10">E3 ubiquitin-protein ligase that acts as a regulator of antiviral immune response and inflammation by mediating ubiquitination of substrates (PubMed:18773414, PubMed:27929086, PubMed:27992402). Acts as a regulator of innate immune defense against viruses by mediating 'Lys-63'-linked ubiquitination of MAVS, promoting MAVS polymerization and formation of three-stranded helical filaments on mitochondria (PubMed:27992402). Acts as a negative regulator of the NLRP3 inflammasome by catalyzing 'Lys-48'-linked ubiquitination of NLRP3, leading to its degradation (PubMed:27929086). Regulator of Src-induced anchorage independent cell growth (By similarity).</text>
</comment>
<comment type="catalytic activity">
    <reaction evidence="8 9">
        <text>S-ubiquitinyl-[E2 ubiquitin-conjugating enzyme]-L-cysteine + [acceptor protein]-L-lysine = [E2 ubiquitin-conjugating enzyme]-L-cysteine + N(6)-ubiquitinyl-[acceptor protein]-L-lysine.</text>
        <dbReference type="EC" id="2.3.2.27"/>
    </reaction>
</comment>
<comment type="pathway">
    <text evidence="8 9">Protein modification; protein ubiquitination.</text>
</comment>
<comment type="subunit">
    <text evidence="1 8">May form oligomers (PubMed:18773414). Interacts with isoform p52shc of SHC1 (By similarity).</text>
</comment>
<comment type="interaction">
    <interactant intactId="EBI-747544">
        <id>Q9BZY9</id>
    </interactant>
    <interactant intactId="EBI-356687">
        <id>P40227</id>
        <label>CCT6A</label>
    </interactant>
    <organismsDiffer>false</organismsDiffer>
    <experiments>3</experiments>
</comment>
<comment type="interaction">
    <interactant intactId="EBI-747544">
        <id>Q9BZY9</id>
    </interactant>
    <interactant intactId="EBI-740978">
        <id>P43355</id>
        <label>MAGEA1</label>
    </interactant>
    <organismsDiffer>false</organismsDiffer>
    <experiments>4</experiments>
</comment>
<comment type="interaction">
    <interactant intactId="EBI-747544">
        <id>Q9BZY9</id>
    </interactant>
    <interactant intactId="EBI-473850">
        <id>P61086</id>
        <label>UBE2K</label>
    </interactant>
    <organismsDiffer>false</organismsDiffer>
    <experiments>11</experiments>
</comment>
<comment type="subcellular location">
    <subcellularLocation>
        <location evidence="8">Cytoplasm</location>
    </subcellularLocation>
    <subcellularLocation>
        <location evidence="8 10">Mitochondrion</location>
    </subcellularLocation>
    <text evidence="8 10">Predominantly expressed in the cytoplasm but a fraction is associated with the mitochondria (PubMed:18773414). Recruited t omitochondria after viral infection (PubMed:27992402).</text>
</comment>
<comment type="alternative products">
    <event type="alternative splicing"/>
    <isoform>
        <id>Q9BZY9-1</id>
        <name evidence="12">Alpha</name>
        <sequence type="displayed"/>
    </isoform>
    <isoform>
        <id>Q9BZY9-2</id>
        <name evidence="12">Beta</name>
        <sequence type="described" ref="VSP_005764 VSP_005765"/>
    </isoform>
</comment>
<comment type="tissue specificity">
    <text evidence="8">Up-regulated in gastric adenocarcinomas.</text>
</comment>
<comment type="PTM">
    <text evidence="8">Auto-ubiquitinated (in vitro).</text>
</comment>
<comment type="miscellaneous">
    <molecule>Isoform Beta</molecule>
    <text evidence="13">May be produced at very low levels due to a premature stop codon in the mRNA, leading to nonsense-mediated mRNA decay.</text>
</comment>
<comment type="similarity">
    <text evidence="13">Belongs to the TRIM/RBCC family.</text>
</comment>
<comment type="sequence caution" evidence="13">
    <conflict type="erroneous initiation">
        <sequence resource="EMBL-CDS" id="AAH16866"/>
    </conflict>
</comment>
<dbReference type="EC" id="2.3.2.27" evidence="8 9"/>
<dbReference type="EMBL" id="AF230386">
    <property type="protein sequence ID" value="AAG50165.1"/>
    <property type="molecule type" value="mRNA"/>
</dbReference>
<dbReference type="EMBL" id="AF230387">
    <property type="protein sequence ID" value="AAG50166.1"/>
    <property type="molecule type" value="mRNA"/>
</dbReference>
<dbReference type="EMBL" id="BT006675">
    <property type="protein sequence ID" value="AAP35321.1"/>
    <property type="molecule type" value="mRNA"/>
</dbReference>
<dbReference type="EMBL" id="AK222729">
    <property type="protein sequence ID" value="BAD96449.1"/>
    <property type="molecule type" value="mRNA"/>
</dbReference>
<dbReference type="EMBL" id="AL669914">
    <property type="status" value="NOT_ANNOTATED_CDS"/>
    <property type="molecule type" value="Genomic_DNA"/>
</dbReference>
<dbReference type="EMBL" id="AL671859">
    <property type="status" value="NOT_ANNOTATED_CDS"/>
    <property type="molecule type" value="Genomic_DNA"/>
</dbReference>
<dbReference type="EMBL" id="BX322644">
    <property type="status" value="NOT_ANNOTATED_CDS"/>
    <property type="molecule type" value="Genomic_DNA"/>
</dbReference>
<dbReference type="EMBL" id="CR753815">
    <property type="status" value="NOT_ANNOTATED_CDS"/>
    <property type="molecule type" value="Genomic_DNA"/>
</dbReference>
<dbReference type="EMBL" id="BC016866">
    <property type="protein sequence ID" value="AAH16866.1"/>
    <property type="status" value="ALT_INIT"/>
    <property type="molecule type" value="mRNA"/>
</dbReference>
<dbReference type="EMBL" id="BC017017">
    <property type="protein sequence ID" value="AAH17017.1"/>
    <property type="molecule type" value="mRNA"/>
</dbReference>
<dbReference type="EMBL" id="Y07828">
    <property type="protein sequence ID" value="CAA69165.1"/>
    <property type="molecule type" value="mRNA"/>
</dbReference>
<dbReference type="CCDS" id="CCDS34374.1">
    <molecule id="Q9BZY9-1"/>
</dbReference>
<dbReference type="RefSeq" id="NP_008959.3">
    <molecule id="Q9BZY9-1"/>
    <property type="nucleotide sequence ID" value="NM_007028.4"/>
</dbReference>
<dbReference type="PDB" id="2YSJ">
    <property type="method" value="NMR"/>
    <property type="chains" value="A=1-56"/>
</dbReference>
<dbReference type="PDB" id="2YSL">
    <property type="method" value="NMR"/>
    <property type="chains" value="A=1-66"/>
</dbReference>
<dbReference type="PDBsum" id="2YSJ"/>
<dbReference type="PDBsum" id="2YSL"/>
<dbReference type="BMRB" id="Q9BZY9"/>
<dbReference type="SMR" id="Q9BZY9"/>
<dbReference type="BioGRID" id="116257">
    <property type="interactions" value="454"/>
</dbReference>
<dbReference type="CORUM" id="Q9BZY9"/>
<dbReference type="FunCoup" id="Q9BZY9">
    <property type="interactions" value="20"/>
</dbReference>
<dbReference type="IntAct" id="Q9BZY9">
    <property type="interactions" value="16"/>
</dbReference>
<dbReference type="STRING" id="9606.ENSP00000365924"/>
<dbReference type="GlyCosmos" id="Q9BZY9">
    <property type="glycosylation" value="1 site, 2 glycans"/>
</dbReference>
<dbReference type="GlyGen" id="Q9BZY9">
    <property type="glycosylation" value="1 site, 2 O-linked glycans (1 site)"/>
</dbReference>
<dbReference type="iPTMnet" id="Q9BZY9"/>
<dbReference type="PhosphoSitePlus" id="Q9BZY9"/>
<dbReference type="SwissPalm" id="Q9BZY9"/>
<dbReference type="BioMuta" id="TRIM31"/>
<dbReference type="DMDM" id="68068082"/>
<dbReference type="jPOST" id="Q9BZY9"/>
<dbReference type="MassIVE" id="Q9BZY9"/>
<dbReference type="PaxDb" id="9606-ENSP00000365924"/>
<dbReference type="PeptideAtlas" id="Q9BZY9"/>
<dbReference type="ProteomicsDB" id="79921">
    <molecule id="Q9BZY9-1"/>
</dbReference>
<dbReference type="ProteomicsDB" id="79922">
    <molecule id="Q9BZY9-2"/>
</dbReference>
<dbReference type="Antibodypedia" id="11702">
    <property type="antibodies" value="201 antibodies from 27 providers"/>
</dbReference>
<dbReference type="DNASU" id="11074"/>
<dbReference type="Ensembl" id="ENST00000357569.5">
    <property type="protein sequence ID" value="ENSP00000350182.5"/>
    <property type="gene ID" value="ENSG00000137397.18"/>
</dbReference>
<dbReference type="Ensembl" id="ENST00000376734.4">
    <molecule id="Q9BZY9-1"/>
    <property type="protein sequence ID" value="ENSP00000365924.3"/>
    <property type="gene ID" value="ENSG00000204616.11"/>
</dbReference>
<dbReference type="Ensembl" id="ENST00000433864.2">
    <property type="protein sequence ID" value="ENSP00000390551.2"/>
    <property type="gene ID" value="ENSG00000233573.9"/>
</dbReference>
<dbReference type="Ensembl" id="ENST00000445679.2">
    <molecule id="Q9BZY9-1"/>
    <property type="protein sequence ID" value="ENSP00000409501.2"/>
    <property type="gene ID" value="ENSG00000224168.9"/>
</dbReference>
<dbReference type="Ensembl" id="ENST00000449412.2">
    <molecule id="Q9BZY9-1"/>
    <property type="protein sequence ID" value="ENSP00000398677.2"/>
    <property type="gene ID" value="ENSG00000223531.9"/>
</dbReference>
<dbReference type="Ensembl" id="ENST00000453266.2">
    <molecule id="Q9BZY9-1"/>
    <property type="protein sequence ID" value="ENSP00000391685.2"/>
    <property type="gene ID" value="ENSG00000225130.9"/>
</dbReference>
<dbReference type="GeneID" id="11074"/>
<dbReference type="KEGG" id="hsa:11074"/>
<dbReference type="MANE-Select" id="ENST00000376734.4">
    <property type="protein sequence ID" value="ENSP00000365924.3"/>
    <property type="RefSeq nucleotide sequence ID" value="NM_007028.5"/>
    <property type="RefSeq protein sequence ID" value="NP_008959.3"/>
</dbReference>
<dbReference type="UCSC" id="uc003npg.2">
    <molecule id="Q9BZY9-1"/>
    <property type="organism name" value="human"/>
</dbReference>
<dbReference type="AGR" id="HGNC:16289"/>
<dbReference type="CTD" id="11074"/>
<dbReference type="DisGeNET" id="11074"/>
<dbReference type="GeneCards" id="TRIM31"/>
<dbReference type="HGNC" id="HGNC:16289">
    <property type="gene designation" value="TRIM31"/>
</dbReference>
<dbReference type="HPA" id="ENSG00000204616">
    <property type="expression patterns" value="Tissue enhanced (intestine, stomach, urinary bladder)"/>
</dbReference>
<dbReference type="MIM" id="609316">
    <property type="type" value="gene"/>
</dbReference>
<dbReference type="neXtProt" id="NX_Q9BZY9"/>
<dbReference type="OpenTargets" id="ENSG00000204616"/>
<dbReference type="PharmGKB" id="PA38117"/>
<dbReference type="VEuPathDB" id="HostDB:ENSG00000204616"/>
<dbReference type="eggNOG" id="KOG2177">
    <property type="taxonomic scope" value="Eukaryota"/>
</dbReference>
<dbReference type="GeneTree" id="ENSGT00940000163585"/>
<dbReference type="HOGENOM" id="CLU_013137_6_1_1"/>
<dbReference type="InParanoid" id="Q9BZY9"/>
<dbReference type="OMA" id="FWALRIA"/>
<dbReference type="OrthoDB" id="654191at2759"/>
<dbReference type="PAN-GO" id="Q9BZY9">
    <property type="GO annotations" value="5 GO annotations based on evolutionary models"/>
</dbReference>
<dbReference type="PhylomeDB" id="Q9BZY9"/>
<dbReference type="TreeFam" id="TF338674"/>
<dbReference type="PathwayCommons" id="Q9BZY9"/>
<dbReference type="Reactome" id="R-HSA-877300">
    <property type="pathway name" value="Interferon gamma signaling"/>
</dbReference>
<dbReference type="SignaLink" id="Q9BZY9"/>
<dbReference type="SIGNOR" id="Q9BZY9"/>
<dbReference type="UniPathway" id="UPA00143"/>
<dbReference type="BioGRID-ORCS" id="11074">
    <property type="hits" value="11 hits in 1188 CRISPR screens"/>
</dbReference>
<dbReference type="ChiTaRS" id="TRIM31">
    <property type="organism name" value="human"/>
</dbReference>
<dbReference type="EvolutionaryTrace" id="Q9BZY9"/>
<dbReference type="GeneWiki" id="TRIM31"/>
<dbReference type="GenomeRNAi" id="11074"/>
<dbReference type="Pharos" id="Q9BZY9">
    <property type="development level" value="Tbio"/>
</dbReference>
<dbReference type="PRO" id="PR:Q9BZY9"/>
<dbReference type="Proteomes" id="UP000005640">
    <property type="component" value="Chromosome 6"/>
</dbReference>
<dbReference type="RNAct" id="Q9BZY9">
    <property type="molecule type" value="protein"/>
</dbReference>
<dbReference type="Bgee" id="ENSG00000204616">
    <property type="expression patterns" value="Expressed in mucosa of transverse colon and 94 other cell types or tissues"/>
</dbReference>
<dbReference type="ExpressionAtlas" id="Q9BZY9">
    <property type="expression patterns" value="baseline and differential"/>
</dbReference>
<dbReference type="GO" id="GO:0005737">
    <property type="term" value="C:cytoplasm"/>
    <property type="evidence" value="ECO:0000318"/>
    <property type="project" value="GO_Central"/>
</dbReference>
<dbReference type="GO" id="GO:0005829">
    <property type="term" value="C:cytosol"/>
    <property type="evidence" value="ECO:0000304"/>
    <property type="project" value="Reactome"/>
</dbReference>
<dbReference type="GO" id="GO:0005739">
    <property type="term" value="C:mitochondrion"/>
    <property type="evidence" value="ECO:0000314"/>
    <property type="project" value="UniProtKB"/>
</dbReference>
<dbReference type="GO" id="GO:0003713">
    <property type="term" value="F:transcription coactivator activity"/>
    <property type="evidence" value="ECO:0000314"/>
    <property type="project" value="ARUK-UCL"/>
</dbReference>
<dbReference type="GO" id="GO:0061630">
    <property type="term" value="F:ubiquitin protein ligase activity"/>
    <property type="evidence" value="ECO:0000314"/>
    <property type="project" value="UniProtKB"/>
</dbReference>
<dbReference type="GO" id="GO:0008270">
    <property type="term" value="F:zinc ion binding"/>
    <property type="evidence" value="ECO:0007669"/>
    <property type="project" value="UniProtKB-KW"/>
</dbReference>
<dbReference type="GO" id="GO:0140374">
    <property type="term" value="P:antiviral innate immune response"/>
    <property type="evidence" value="ECO:0000314"/>
    <property type="project" value="UniProtKB"/>
</dbReference>
<dbReference type="GO" id="GO:0051607">
    <property type="term" value="P:defense response to virus"/>
    <property type="evidence" value="ECO:0000314"/>
    <property type="project" value="UniProtKB"/>
</dbReference>
<dbReference type="GO" id="GO:0046597">
    <property type="term" value="P:host-mediated suppression of symbiont invasion"/>
    <property type="evidence" value="ECO:0000315"/>
    <property type="project" value="UniProtKB"/>
</dbReference>
<dbReference type="GO" id="GO:0006954">
    <property type="term" value="P:inflammatory response"/>
    <property type="evidence" value="ECO:0007669"/>
    <property type="project" value="UniProtKB-KW"/>
</dbReference>
<dbReference type="GO" id="GO:0045087">
    <property type="term" value="P:innate immune response"/>
    <property type="evidence" value="ECO:0000315"/>
    <property type="project" value="UniProtKB"/>
</dbReference>
<dbReference type="GO" id="GO:1900226">
    <property type="term" value="P:negative regulation of NLRP3 inflammasome complex assembly"/>
    <property type="evidence" value="ECO:0000314"/>
    <property type="project" value="UniProtKB"/>
</dbReference>
<dbReference type="GO" id="GO:0032897">
    <property type="term" value="P:negative regulation of viral transcription"/>
    <property type="evidence" value="ECO:0000314"/>
    <property type="project" value="UniProtKB"/>
</dbReference>
<dbReference type="GO" id="GO:0051091">
    <property type="term" value="P:positive regulation of DNA-binding transcription factor activity"/>
    <property type="evidence" value="ECO:0000315"/>
    <property type="project" value="UniProtKB"/>
</dbReference>
<dbReference type="GO" id="GO:0070936">
    <property type="term" value="P:protein K48-linked ubiquitination"/>
    <property type="evidence" value="ECO:0000314"/>
    <property type="project" value="UniProtKB"/>
</dbReference>
<dbReference type="GO" id="GO:0070534">
    <property type="term" value="P:protein K63-linked ubiquitination"/>
    <property type="evidence" value="ECO:0000314"/>
    <property type="project" value="UniProtKB"/>
</dbReference>
<dbReference type="GO" id="GO:0006511">
    <property type="term" value="P:ubiquitin-dependent protein catabolic process"/>
    <property type="evidence" value="ECO:0000314"/>
    <property type="project" value="UniProtKB"/>
</dbReference>
<dbReference type="GO" id="GO:0019076">
    <property type="term" value="P:viral release from host cell"/>
    <property type="evidence" value="ECO:0000315"/>
    <property type="project" value="UniProtKB"/>
</dbReference>
<dbReference type="CDD" id="cd19765">
    <property type="entry name" value="Bbox2_TRIM10-like"/>
    <property type="match status" value="1"/>
</dbReference>
<dbReference type="CDD" id="cd16582">
    <property type="entry name" value="RING-HC_TRIM31_C-V"/>
    <property type="match status" value="1"/>
</dbReference>
<dbReference type="FunFam" id="3.30.40.10:FF:000699">
    <property type="entry name" value="E3 ubiquitin-protein ligase TRIM31"/>
    <property type="match status" value="1"/>
</dbReference>
<dbReference type="Gene3D" id="3.30.160.60">
    <property type="entry name" value="Classic Zinc Finger"/>
    <property type="match status" value="1"/>
</dbReference>
<dbReference type="Gene3D" id="3.30.40.10">
    <property type="entry name" value="Zinc/RING finger domain, C3HC4 (zinc finger)"/>
    <property type="match status" value="1"/>
</dbReference>
<dbReference type="InterPro" id="IPR050143">
    <property type="entry name" value="TRIM/RBCC"/>
</dbReference>
<dbReference type="InterPro" id="IPR000315">
    <property type="entry name" value="Znf_B-box"/>
</dbReference>
<dbReference type="InterPro" id="IPR020457">
    <property type="entry name" value="Znf_B-box_chordata"/>
</dbReference>
<dbReference type="InterPro" id="IPR001841">
    <property type="entry name" value="Znf_RING"/>
</dbReference>
<dbReference type="InterPro" id="IPR013083">
    <property type="entry name" value="Znf_RING/FYVE/PHD"/>
</dbReference>
<dbReference type="InterPro" id="IPR017907">
    <property type="entry name" value="Znf_RING_CS"/>
</dbReference>
<dbReference type="PANTHER" id="PTHR24103">
    <property type="entry name" value="E3 UBIQUITIN-PROTEIN LIGASE TRIM"/>
    <property type="match status" value="1"/>
</dbReference>
<dbReference type="Pfam" id="PF00643">
    <property type="entry name" value="zf-B_box"/>
    <property type="match status" value="1"/>
</dbReference>
<dbReference type="Pfam" id="PF15227">
    <property type="entry name" value="zf-C3HC4_4"/>
    <property type="match status" value="1"/>
</dbReference>
<dbReference type="PRINTS" id="PR01406">
    <property type="entry name" value="BBOXZNFINGER"/>
</dbReference>
<dbReference type="SMART" id="SM00336">
    <property type="entry name" value="BBOX"/>
    <property type="match status" value="1"/>
</dbReference>
<dbReference type="SMART" id="SM00184">
    <property type="entry name" value="RING"/>
    <property type="match status" value="1"/>
</dbReference>
<dbReference type="SUPFAM" id="SSF57845">
    <property type="entry name" value="B-box zinc-binding domain"/>
    <property type="match status" value="1"/>
</dbReference>
<dbReference type="SUPFAM" id="SSF57850">
    <property type="entry name" value="RING/U-box"/>
    <property type="match status" value="1"/>
</dbReference>
<dbReference type="PROSITE" id="PS50119">
    <property type="entry name" value="ZF_BBOX"/>
    <property type="match status" value="1"/>
</dbReference>
<dbReference type="PROSITE" id="PS00518">
    <property type="entry name" value="ZF_RING_1"/>
    <property type="match status" value="1"/>
</dbReference>
<dbReference type="PROSITE" id="PS50089">
    <property type="entry name" value="ZF_RING_2"/>
    <property type="match status" value="1"/>
</dbReference>
<keyword id="KW-0002">3D-structure</keyword>
<keyword id="KW-0025">Alternative splicing</keyword>
<keyword id="KW-0051">Antiviral defense</keyword>
<keyword id="KW-0175">Coiled coil</keyword>
<keyword id="KW-0963">Cytoplasm</keyword>
<keyword id="KW-0391">Immunity</keyword>
<keyword id="KW-0395">Inflammatory response</keyword>
<keyword id="KW-0399">Innate immunity</keyword>
<keyword id="KW-0479">Metal-binding</keyword>
<keyword id="KW-0496">Mitochondrion</keyword>
<keyword id="KW-1267">Proteomics identification</keyword>
<keyword id="KW-1185">Reference proteome</keyword>
<keyword id="KW-0808">Transferase</keyword>
<keyword id="KW-0832">Ubl conjugation</keyword>
<keyword id="KW-0833">Ubl conjugation pathway</keyword>
<keyword id="KW-0862">Zinc</keyword>
<keyword id="KW-0863">Zinc-finger</keyword>
<sequence length="425" mass="48244">MASGQFVNKLQEEVICPICLDILQKPVTIDCGHNFCLKCITQIGETSCGFFKCPLCKTSVRKNAIRFNSLLRNLVEKIQALQASEVQSKRKEATCPRHQEMFHYFCEDDGKFLCFVCRESKDHKSHNVSLIEEAAQNYQGQIQEQIQVLQQKEKETVQVKAQGVHRVDVFTDQVEHEKQRILTEFELLHQVLEEEKNFLLSRIYWLGHEGTEAGKHYVASTEPQLNDLKKLVDSLKTKQNMPPRQLLEDIKVVLCRSEEFQFLNPTPVPLELEKKLSEAKSRHDSITGSLKKFKDQLQADRKKDENRFFKSMNKNDMKSWGLLQKNNHKMNKTSEPGSSSAGGRTTSGPPNHHSSAPSHSLFRASSAGKVTFPVCLLASYDEISGQGASSQDTKTFDVALSEELHAALSEWLTAIRAWFCEVPSS</sequence>
<gene>
    <name evidence="12 14" type="primary">TRIM31</name>
    <name evidence="14" type="synonym">C6orf13</name>
    <name type="synonym">RNF</name>
</gene>
<protein>
    <recommendedName>
        <fullName evidence="13">E3 ubiquitin-protein ligase TRIM31</fullName>
        <ecNumber evidence="8 9">2.3.2.27</ecNumber>
    </recommendedName>
    <alternativeName>
        <fullName evidence="12">Tripartite motif-containing protein 31</fullName>
    </alternativeName>
</protein>
<reference key="1">
    <citation type="journal article" date="2001" name="EMBO J.">
        <title>The tripartite motif family identifies cell compartments.</title>
        <authorList>
            <person name="Reymond A."/>
            <person name="Meroni G."/>
            <person name="Fantozzi A."/>
            <person name="Merla G."/>
            <person name="Cairo S."/>
            <person name="Luzi L."/>
            <person name="Riganelli D."/>
            <person name="Zanaria E."/>
            <person name="Messali S."/>
            <person name="Cainarca S."/>
            <person name="Guffanti A."/>
            <person name="Minucci S."/>
            <person name="Pelicci P.G."/>
            <person name="Ballabio A."/>
        </authorList>
    </citation>
    <scope>NUCLEOTIDE SEQUENCE [MRNA] (ISOFORMS ALPHA AND BETA)</scope>
</reference>
<reference key="2">
    <citation type="submission" date="2003-05" db="EMBL/GenBank/DDBJ databases">
        <title>Cloning of human full-length CDSs in BD Creator(TM) system donor vector.</title>
        <authorList>
            <person name="Kalnine N."/>
            <person name="Chen X."/>
            <person name="Rolfs A."/>
            <person name="Halleck A."/>
            <person name="Hines L."/>
            <person name="Eisenstein S."/>
            <person name="Koundinya M."/>
            <person name="Raphael J."/>
            <person name="Moreira D."/>
            <person name="Kelley T."/>
            <person name="LaBaer J."/>
            <person name="Lin Y."/>
            <person name="Phelan M."/>
            <person name="Farmer A."/>
        </authorList>
    </citation>
    <scope>NUCLEOTIDE SEQUENCE [LARGE SCALE MRNA] (ISOFORM ALPHA)</scope>
    <scope>VARIANT LYS-421</scope>
</reference>
<reference key="3">
    <citation type="submission" date="2005-04" db="EMBL/GenBank/DDBJ databases">
        <authorList>
            <person name="Suzuki Y."/>
            <person name="Sugano S."/>
            <person name="Totoki Y."/>
            <person name="Toyoda A."/>
            <person name="Takeda T."/>
            <person name="Sakaki Y."/>
            <person name="Tanaka A."/>
            <person name="Yokoyama S."/>
        </authorList>
    </citation>
    <scope>NUCLEOTIDE SEQUENCE [LARGE SCALE MRNA] (ISOFORM ALPHA)</scope>
    <source>
        <tissue>Colon</tissue>
    </source>
</reference>
<reference key="4">
    <citation type="journal article" date="2003" name="Nature">
        <title>The DNA sequence and analysis of human chromosome 6.</title>
        <authorList>
            <person name="Mungall A.J."/>
            <person name="Palmer S.A."/>
            <person name="Sims S.K."/>
            <person name="Edwards C.A."/>
            <person name="Ashurst J.L."/>
            <person name="Wilming L."/>
            <person name="Jones M.C."/>
            <person name="Horton R."/>
            <person name="Hunt S.E."/>
            <person name="Scott C.E."/>
            <person name="Gilbert J.G.R."/>
            <person name="Clamp M.E."/>
            <person name="Bethel G."/>
            <person name="Milne S."/>
            <person name="Ainscough R."/>
            <person name="Almeida J.P."/>
            <person name="Ambrose K.D."/>
            <person name="Andrews T.D."/>
            <person name="Ashwell R.I.S."/>
            <person name="Babbage A.K."/>
            <person name="Bagguley C.L."/>
            <person name="Bailey J."/>
            <person name="Banerjee R."/>
            <person name="Barker D.J."/>
            <person name="Barlow K.F."/>
            <person name="Bates K."/>
            <person name="Beare D.M."/>
            <person name="Beasley H."/>
            <person name="Beasley O."/>
            <person name="Bird C.P."/>
            <person name="Blakey S.E."/>
            <person name="Bray-Allen S."/>
            <person name="Brook J."/>
            <person name="Brown A.J."/>
            <person name="Brown J.Y."/>
            <person name="Burford D.C."/>
            <person name="Burrill W."/>
            <person name="Burton J."/>
            <person name="Carder C."/>
            <person name="Carter N.P."/>
            <person name="Chapman J.C."/>
            <person name="Clark S.Y."/>
            <person name="Clark G."/>
            <person name="Clee C.M."/>
            <person name="Clegg S."/>
            <person name="Cobley V."/>
            <person name="Collier R.E."/>
            <person name="Collins J.E."/>
            <person name="Colman L.K."/>
            <person name="Corby N.R."/>
            <person name="Coville G.J."/>
            <person name="Culley K.M."/>
            <person name="Dhami P."/>
            <person name="Davies J."/>
            <person name="Dunn M."/>
            <person name="Earthrowl M.E."/>
            <person name="Ellington A.E."/>
            <person name="Evans K.A."/>
            <person name="Faulkner L."/>
            <person name="Francis M.D."/>
            <person name="Frankish A."/>
            <person name="Frankland J."/>
            <person name="French L."/>
            <person name="Garner P."/>
            <person name="Garnett J."/>
            <person name="Ghori M.J."/>
            <person name="Gilby L.M."/>
            <person name="Gillson C.J."/>
            <person name="Glithero R.J."/>
            <person name="Grafham D.V."/>
            <person name="Grant M."/>
            <person name="Gribble S."/>
            <person name="Griffiths C."/>
            <person name="Griffiths M.N.D."/>
            <person name="Hall R."/>
            <person name="Halls K.S."/>
            <person name="Hammond S."/>
            <person name="Harley J.L."/>
            <person name="Hart E.A."/>
            <person name="Heath P.D."/>
            <person name="Heathcott R."/>
            <person name="Holmes S.J."/>
            <person name="Howden P.J."/>
            <person name="Howe K.L."/>
            <person name="Howell G.R."/>
            <person name="Huckle E."/>
            <person name="Humphray S.J."/>
            <person name="Humphries M.D."/>
            <person name="Hunt A.R."/>
            <person name="Johnson C.M."/>
            <person name="Joy A.A."/>
            <person name="Kay M."/>
            <person name="Keenan S.J."/>
            <person name="Kimberley A.M."/>
            <person name="King A."/>
            <person name="Laird G.K."/>
            <person name="Langford C."/>
            <person name="Lawlor S."/>
            <person name="Leongamornlert D.A."/>
            <person name="Leversha M."/>
            <person name="Lloyd C.R."/>
            <person name="Lloyd D.M."/>
            <person name="Loveland J.E."/>
            <person name="Lovell J."/>
            <person name="Martin S."/>
            <person name="Mashreghi-Mohammadi M."/>
            <person name="Maslen G.L."/>
            <person name="Matthews L."/>
            <person name="McCann O.T."/>
            <person name="McLaren S.J."/>
            <person name="McLay K."/>
            <person name="McMurray A."/>
            <person name="Moore M.J.F."/>
            <person name="Mullikin J.C."/>
            <person name="Niblett D."/>
            <person name="Nickerson T."/>
            <person name="Novik K.L."/>
            <person name="Oliver K."/>
            <person name="Overton-Larty E.K."/>
            <person name="Parker A."/>
            <person name="Patel R."/>
            <person name="Pearce A.V."/>
            <person name="Peck A.I."/>
            <person name="Phillimore B.J.C.T."/>
            <person name="Phillips S."/>
            <person name="Plumb R.W."/>
            <person name="Porter K.M."/>
            <person name="Ramsey Y."/>
            <person name="Ranby S.A."/>
            <person name="Rice C.M."/>
            <person name="Ross M.T."/>
            <person name="Searle S.M."/>
            <person name="Sehra H.K."/>
            <person name="Sheridan E."/>
            <person name="Skuce C.D."/>
            <person name="Smith S."/>
            <person name="Smith M."/>
            <person name="Spraggon L."/>
            <person name="Squares S.L."/>
            <person name="Steward C.A."/>
            <person name="Sycamore N."/>
            <person name="Tamlyn-Hall G."/>
            <person name="Tester J."/>
            <person name="Theaker A.J."/>
            <person name="Thomas D.W."/>
            <person name="Thorpe A."/>
            <person name="Tracey A."/>
            <person name="Tromans A."/>
            <person name="Tubby B."/>
            <person name="Wall M."/>
            <person name="Wallis J.M."/>
            <person name="West A.P."/>
            <person name="White S.S."/>
            <person name="Whitehead S.L."/>
            <person name="Whittaker H."/>
            <person name="Wild A."/>
            <person name="Willey D.J."/>
            <person name="Wilmer T.E."/>
            <person name="Wood J.M."/>
            <person name="Wray P.W."/>
            <person name="Wyatt J.C."/>
            <person name="Young L."/>
            <person name="Younger R.M."/>
            <person name="Bentley D.R."/>
            <person name="Coulson A."/>
            <person name="Durbin R.M."/>
            <person name="Hubbard T."/>
            <person name="Sulston J.E."/>
            <person name="Dunham I."/>
            <person name="Rogers J."/>
            <person name="Beck S."/>
        </authorList>
    </citation>
    <scope>NUCLEOTIDE SEQUENCE [LARGE SCALE GENOMIC DNA]</scope>
    <scope>VARIANTS CYS-118; ILE-232 AND LYS-421</scope>
</reference>
<reference key="5">
    <citation type="journal article" date="2004" name="Genome Res.">
        <title>The status, quality, and expansion of the NIH full-length cDNA project: the Mammalian Gene Collection (MGC).</title>
        <authorList>
            <consortium name="The MGC Project Team"/>
        </authorList>
    </citation>
    <scope>NUCLEOTIDE SEQUENCE [LARGE SCALE MRNA] (ISOFORM ALPHA)</scope>
    <scope>VARIANT LYS-421</scope>
    <source>
        <tissue>Colon</tissue>
    </source>
</reference>
<reference key="6">
    <citation type="submission" date="1997-01" db="EMBL/GenBank/DDBJ databases">
        <title>Cloning, structural analysis and mapping of B30 and B7 family members, to the MHC and other chromosomal regions. Toward the identification of the ancestral major histocompatibility complex.</title>
        <authorList>
            <person name="Henry J."/>
            <person name="Ribouchon M.-T."/>
            <person name="Depetris D."/>
            <person name="Mattei M.-G."/>
            <person name="Offer C."/>
            <person name="Tazi-Ahnini R."/>
            <person name="Pantarotti P."/>
        </authorList>
    </citation>
    <scope>NUCLEOTIDE SEQUENCE [MRNA] OF 1-236</scope>
</reference>
<reference key="7">
    <citation type="journal article" date="2004" name="Genome Biol.">
        <title>An unappreciated role for RNA surveillance.</title>
        <authorList>
            <person name="Hillman R.T."/>
            <person name="Green R.E."/>
            <person name="Brenner S.E."/>
        </authorList>
    </citation>
    <scope>SPLICE ISOFORM(S) THAT ARE POTENTIAL NMD TARGET(S)</scope>
</reference>
<reference key="8">
    <citation type="journal article" date="2008" name="J. Cell. Biochem.">
        <title>Characterization of TRIM31, upregulated in gastric adenocarcinoma, as a novel RBCC protein.</title>
        <authorList>
            <person name="Sugiura T."/>
            <person name="Miyamoto K."/>
        </authorList>
    </citation>
    <scope>FUNCTION</scope>
    <scope>OLIGOMERIZATION</scope>
    <scope>SUBCELLULAR LOCATION</scope>
    <scope>TISSUE SPECIFICITY</scope>
    <scope>AUTOUBIQUITINATION</scope>
    <scope>PATHWAY</scope>
</reference>
<reference key="9">
    <citation type="journal article" date="2016" name="Nat. Commun.">
        <title>The E3 ubiquitin ligase TRIM31 attenuates NLRP3 inflammasome activation by promoting proteasomal degradation of NLRP3.</title>
        <authorList>
            <person name="Song H."/>
            <person name="Liu B."/>
            <person name="Huai W."/>
            <person name="Yu Z."/>
            <person name="Wang W."/>
            <person name="Zhao J."/>
            <person name="Han L."/>
            <person name="Jiang G."/>
            <person name="Zhang L."/>
            <person name="Gao C."/>
            <person name="Zhao W."/>
        </authorList>
    </citation>
    <scope>FUNCTION</scope>
    <scope>CATALYTIC ACTIVITY</scope>
    <scope>PATHWAY</scope>
    <scope>SUBCELLULAR LOCATION</scope>
    <scope>MUTAGENESIS OF CYS-16; CYS-31 AND 53-CYS--CYS-56</scope>
</reference>
<reference key="10">
    <citation type="journal article" date="2017" name="Nat. Immunol.">
        <title>The ubiquitin E3 ligase TRIM31 promotes aggregation and activation of the signaling adaptor MAVS through Lys63-linked polyubiquitination.</title>
        <authorList>
            <person name="Liu B."/>
            <person name="Zhang M."/>
            <person name="Chu H."/>
            <person name="Zhang H."/>
            <person name="Wu H."/>
            <person name="Song G."/>
            <person name="Wang P."/>
            <person name="Zhao K."/>
            <person name="Hou J."/>
            <person name="Wang X."/>
            <person name="Zhang L."/>
            <person name="Gao C."/>
        </authorList>
    </citation>
    <scope>FUNCTION</scope>
    <scope>CATALYTIC ACTIVITY</scope>
    <scope>PATHWAY</scope>
</reference>
<reference key="11">
    <citation type="submission" date="2007-10" db="PDB data bank">
        <title>Solution structure of the RING domain (1-66) from tripartite motif-containing protein 31.</title>
        <authorList>
            <consortium name="RIKEN structural genomics initiative (RSGI)"/>
        </authorList>
    </citation>
    <scope>STRUCTURE BY NMR OF 1-66</scope>
</reference>
<evidence type="ECO:0000250" key="1">
    <source>
        <dbReference type="UniProtKB" id="Q8R0K2"/>
    </source>
</evidence>
<evidence type="ECO:0000255" key="2"/>
<evidence type="ECO:0000255" key="3">
    <source>
        <dbReference type="PROSITE-ProRule" id="PRU00024"/>
    </source>
</evidence>
<evidence type="ECO:0000255" key="4">
    <source>
        <dbReference type="PROSITE-ProRule" id="PRU00175"/>
    </source>
</evidence>
<evidence type="ECO:0000256" key="5">
    <source>
        <dbReference type="SAM" id="MobiDB-lite"/>
    </source>
</evidence>
<evidence type="ECO:0000269" key="6">
    <source>
    </source>
</evidence>
<evidence type="ECO:0000269" key="7">
    <source>
    </source>
</evidence>
<evidence type="ECO:0000269" key="8">
    <source>
    </source>
</evidence>
<evidence type="ECO:0000269" key="9">
    <source>
    </source>
</evidence>
<evidence type="ECO:0000269" key="10">
    <source>
    </source>
</evidence>
<evidence type="ECO:0000269" key="11">
    <source ref="2"/>
</evidence>
<evidence type="ECO:0000303" key="12">
    <source>
    </source>
</evidence>
<evidence type="ECO:0000305" key="13"/>
<evidence type="ECO:0000312" key="14">
    <source>
        <dbReference type="HGNC" id="HGNC:16289"/>
    </source>
</evidence>
<evidence type="ECO:0007829" key="15">
    <source>
        <dbReference type="PDB" id="2YSJ"/>
    </source>
</evidence>
<evidence type="ECO:0007829" key="16">
    <source>
        <dbReference type="PDB" id="2YSL"/>
    </source>
</evidence>
<feature type="chain" id="PRO_0000056245" description="E3 ubiquitin-protein ligase TRIM31">
    <location>
        <begin position="1"/>
        <end position="425"/>
    </location>
</feature>
<feature type="zinc finger region" description="RING-type" evidence="4">
    <location>
        <begin position="16"/>
        <end position="57"/>
    </location>
</feature>
<feature type="zinc finger region" description="B box-type" evidence="3">
    <location>
        <begin position="90"/>
        <end position="131"/>
    </location>
</feature>
<feature type="region of interest" description="Disordered" evidence="5">
    <location>
        <begin position="328"/>
        <end position="360"/>
    </location>
</feature>
<feature type="coiled-coil region" evidence="2">
    <location>
        <begin position="126"/>
        <end position="162"/>
    </location>
</feature>
<feature type="coiled-coil region" evidence="2">
    <location>
        <begin position="270"/>
        <end position="307"/>
    </location>
</feature>
<feature type="compositionally biased region" description="Low complexity" evidence="5">
    <location>
        <begin position="336"/>
        <end position="360"/>
    </location>
</feature>
<feature type="binding site" evidence="3">
    <location>
        <position position="95"/>
    </location>
    <ligand>
        <name>Zn(2+)</name>
        <dbReference type="ChEBI" id="CHEBI:29105"/>
    </ligand>
</feature>
<feature type="binding site" evidence="3">
    <location>
        <position position="98"/>
    </location>
    <ligand>
        <name>Zn(2+)</name>
        <dbReference type="ChEBI" id="CHEBI:29105"/>
    </ligand>
</feature>
<feature type="binding site" evidence="3">
    <location>
        <position position="117"/>
    </location>
    <ligand>
        <name>Zn(2+)</name>
        <dbReference type="ChEBI" id="CHEBI:29105"/>
    </ligand>
</feature>
<feature type="binding site" evidence="3">
    <location>
        <position position="123"/>
    </location>
    <ligand>
        <name>Zn(2+)</name>
        <dbReference type="ChEBI" id="CHEBI:29105"/>
    </ligand>
</feature>
<feature type="splice variant" id="VSP_005764" description="In isoform Beta." evidence="12">
    <original>DIKVVLCRSEEFQFLNPTP</original>
    <variation>NWRKNSVKQNQDTTPSQGA</variation>
    <location>
        <begin position="249"/>
        <end position="267"/>
    </location>
</feature>
<feature type="splice variant" id="VSP_005765" description="In isoform Beta." evidence="12">
    <location>
        <begin position="268"/>
        <end position="425"/>
    </location>
</feature>
<feature type="sequence variant" id="VAR_052139" description="In dbSNP:rs36063651.">
    <original>P</original>
    <variation>R</variation>
    <location>
        <position position="17"/>
    </location>
</feature>
<feature type="sequence variant" id="VAR_022728" description="In dbSNP:rs3734838." evidence="6">
    <original>R</original>
    <variation>C</variation>
    <location>
        <position position="118"/>
    </location>
</feature>
<feature type="sequence variant" id="VAR_022729" description="In dbSNP:rs2523989." evidence="6">
    <original>V</original>
    <variation>I</variation>
    <location>
        <position position="232"/>
    </location>
</feature>
<feature type="sequence variant" id="VAR_052140" description="In dbSNP:rs35775852.">
    <original>L</original>
    <variation>P</variation>
    <location>
        <position position="235"/>
    </location>
</feature>
<feature type="sequence variant" id="VAR_019962" description="In dbSNP:rs1116221." evidence="6 7 11">
    <original>E</original>
    <variation>K</variation>
    <location>
        <position position="421"/>
    </location>
</feature>
<feature type="mutagenesis site" description="Abolished E3 ubiquitin-protein ligase activity and ability to ubiquitinate NLRP3; when associated with A-31." evidence="9">
    <original>C</original>
    <variation>A</variation>
    <location>
        <position position="16"/>
    </location>
</feature>
<feature type="mutagenesis site" description="Abolished E3 ubiquitin-protein ligase activity and ability to ubiquitinate NLRP3; when associated with A-16." evidence="9">
    <original>C</original>
    <variation>A</variation>
    <location>
        <position position="31"/>
    </location>
</feature>
<feature type="mutagenesis site" description="Abolished E3 ubiquitin-protein ligase activity and ability to ubiquitinate MAVS." evidence="9">
    <original>CPLC</original>
    <variation>APLA</variation>
    <location>
        <begin position="53"/>
        <end position="56"/>
    </location>
</feature>
<feature type="sequence conflict" description="In Ref. 1; AAG50165/AAG50166 and 6; CAA69165." evidence="13" ref="1 6">
    <original>LK</original>
    <variation>PQ</variation>
    <location>
        <begin position="37"/>
        <end position="38"/>
    </location>
</feature>
<feature type="sequence conflict" description="In Ref. 1; AAG50165/AAG50166 and 6; CAA69165." evidence="13" ref="1 6">
    <original>KN</original>
    <variation>RD</variation>
    <location>
        <begin position="62"/>
        <end position="63"/>
    </location>
</feature>
<feature type="sequence conflict" description="In Ref. 3; BAD96449." evidence="13" ref="3">
    <original>D</original>
    <variation>G</variation>
    <location>
        <position position="109"/>
    </location>
</feature>
<feature type="sequence conflict" description="In Ref. 6; CAA69165." evidence="13" ref="6">
    <original>ASTEPQLNDLKKLVDSLK</original>
    <variation>EIPLMPTVERSQEARCYP</variation>
    <location>
        <begin position="219"/>
        <end position="236"/>
    </location>
</feature>
<feature type="turn" evidence="15">
    <location>
        <begin position="17"/>
        <end position="19"/>
    </location>
</feature>
<feature type="strand" evidence="16">
    <location>
        <begin position="24"/>
        <end position="28"/>
    </location>
</feature>
<feature type="strand" evidence="15">
    <location>
        <begin position="32"/>
        <end position="35"/>
    </location>
</feature>
<feature type="helix" evidence="15">
    <location>
        <begin position="37"/>
        <end position="46"/>
    </location>
</feature>
<feature type="strand" evidence="16">
    <location>
        <begin position="54"/>
        <end position="56"/>
    </location>
</feature>
<proteinExistence type="evidence at protein level"/>
<organism>
    <name type="scientific">Homo sapiens</name>
    <name type="common">Human</name>
    <dbReference type="NCBI Taxonomy" id="9606"/>
    <lineage>
        <taxon>Eukaryota</taxon>
        <taxon>Metazoa</taxon>
        <taxon>Chordata</taxon>
        <taxon>Craniata</taxon>
        <taxon>Vertebrata</taxon>
        <taxon>Euteleostomi</taxon>
        <taxon>Mammalia</taxon>
        <taxon>Eutheria</taxon>
        <taxon>Euarchontoglires</taxon>
        <taxon>Primates</taxon>
        <taxon>Haplorrhini</taxon>
        <taxon>Catarrhini</taxon>
        <taxon>Hominidae</taxon>
        <taxon>Homo</taxon>
    </lineage>
</organism>
<name>TRI31_HUMAN</name>
<accession>Q9BZY9</accession>
<accession>A6NLX6</accession>
<accession>A9R9Q4</accession>
<accession>Q53H52</accession>
<accession>Q5RI37</accession>
<accession>Q5SRJ7</accession>
<accession>Q5SRJ8</accession>
<accession>Q5SS28</accession>
<accession>Q96AK4</accession>
<accession>Q96AP8</accession>
<accession>Q99579</accession>
<accession>Q9BZY8</accession>